<keyword id="KW-0328">Glycosyltransferase</keyword>
<keyword id="KW-1185">Reference proteome</keyword>
<keyword id="KW-0808">Transferase</keyword>
<reference key="1">
    <citation type="journal article" date="1997" name="Nature">
        <title>The complete genome sequence of the hyperthermophilic, sulphate-reducing archaeon Archaeoglobus fulgidus.</title>
        <authorList>
            <person name="Klenk H.-P."/>
            <person name="Clayton R.A."/>
            <person name="Tomb J.-F."/>
            <person name="White O."/>
            <person name="Nelson K.E."/>
            <person name="Ketchum K.A."/>
            <person name="Dodson R.J."/>
            <person name="Gwinn M.L."/>
            <person name="Hickey E.K."/>
            <person name="Peterson J.D."/>
            <person name="Richardson D.L."/>
            <person name="Kerlavage A.R."/>
            <person name="Graham D.E."/>
            <person name="Kyrpides N.C."/>
            <person name="Fleischmann R.D."/>
            <person name="Quackenbush J."/>
            <person name="Lee N.H."/>
            <person name="Sutton G.G."/>
            <person name="Gill S.R."/>
            <person name="Kirkness E.F."/>
            <person name="Dougherty B.A."/>
            <person name="McKenney K."/>
            <person name="Adams M.D."/>
            <person name="Loftus B.J."/>
            <person name="Peterson S.N."/>
            <person name="Reich C.I."/>
            <person name="McNeil L.K."/>
            <person name="Badger J.H."/>
            <person name="Glodek A."/>
            <person name="Zhou L."/>
            <person name="Overbeek R."/>
            <person name="Gocayne J.D."/>
            <person name="Weidman J.F."/>
            <person name="McDonald L.A."/>
            <person name="Utterback T.R."/>
            <person name="Cotton M.D."/>
            <person name="Spriggs T."/>
            <person name="Artiach P."/>
            <person name="Kaine B.P."/>
            <person name="Sykes S.M."/>
            <person name="Sadow P.W."/>
            <person name="D'Andrea K.P."/>
            <person name="Bowman C."/>
            <person name="Fujii C."/>
            <person name="Garland S.A."/>
            <person name="Mason T.M."/>
            <person name="Olsen G.J."/>
            <person name="Fraser C.M."/>
            <person name="Smith H.O."/>
            <person name="Woese C.R."/>
            <person name="Venter J.C."/>
        </authorList>
    </citation>
    <scope>NUCLEOTIDE SEQUENCE [LARGE SCALE GENOMIC DNA]</scope>
    <source>
        <strain>ATCC 49558 / DSM 4304 / JCM 9628 / NBRC 100126 / VC-16</strain>
    </source>
</reference>
<dbReference type="EC" id="2.4.2.57" evidence="1"/>
<dbReference type="EMBL" id="AE000782">
    <property type="protein sequence ID" value="AAB89903.1"/>
    <property type="molecule type" value="Genomic_DNA"/>
</dbReference>
<dbReference type="PIR" id="D69417">
    <property type="entry name" value="D69417"/>
</dbReference>
<dbReference type="RefSeq" id="WP_010878838.1">
    <property type="nucleotide sequence ID" value="NC_000917.1"/>
</dbReference>
<dbReference type="SMR" id="O28928"/>
<dbReference type="STRING" id="224325.AF_1341"/>
<dbReference type="PaxDb" id="224325-AF_1341"/>
<dbReference type="EnsemblBacteria" id="AAB89903">
    <property type="protein sequence ID" value="AAB89903"/>
    <property type="gene ID" value="AF_1341"/>
</dbReference>
<dbReference type="KEGG" id="afu:AF_1341"/>
<dbReference type="eggNOG" id="arCOG02013">
    <property type="taxonomic scope" value="Archaea"/>
</dbReference>
<dbReference type="HOGENOM" id="CLU_025040_6_0_2"/>
<dbReference type="OrthoDB" id="9827at2157"/>
<dbReference type="PhylomeDB" id="O28928"/>
<dbReference type="Proteomes" id="UP000002199">
    <property type="component" value="Chromosome"/>
</dbReference>
<dbReference type="GO" id="GO:0005829">
    <property type="term" value="C:cytosol"/>
    <property type="evidence" value="ECO:0007669"/>
    <property type="project" value="TreeGrafter"/>
</dbReference>
<dbReference type="GO" id="GO:0004645">
    <property type="term" value="F:1,4-alpha-oligoglucan phosphorylase activity"/>
    <property type="evidence" value="ECO:0007669"/>
    <property type="project" value="InterPro"/>
</dbReference>
<dbReference type="GO" id="GO:0016208">
    <property type="term" value="F:AMP binding"/>
    <property type="evidence" value="ECO:0007669"/>
    <property type="project" value="UniProtKB-UniRule"/>
</dbReference>
<dbReference type="GO" id="GO:0016763">
    <property type="term" value="F:pentosyltransferase activity"/>
    <property type="evidence" value="ECO:0007669"/>
    <property type="project" value="UniProtKB-UniRule"/>
</dbReference>
<dbReference type="GO" id="GO:0006196">
    <property type="term" value="P:AMP catabolic process"/>
    <property type="evidence" value="ECO:0007669"/>
    <property type="project" value="UniProtKB-UniRule"/>
</dbReference>
<dbReference type="GO" id="GO:0046125">
    <property type="term" value="P:pyrimidine deoxyribonucleoside metabolic process"/>
    <property type="evidence" value="ECO:0007669"/>
    <property type="project" value="InterPro"/>
</dbReference>
<dbReference type="GO" id="GO:0006206">
    <property type="term" value="P:pyrimidine nucleobase metabolic process"/>
    <property type="evidence" value="ECO:0007669"/>
    <property type="project" value="InterPro"/>
</dbReference>
<dbReference type="Gene3D" id="1.20.970.50">
    <property type="match status" value="1"/>
</dbReference>
<dbReference type="Gene3D" id="2.40.40.20">
    <property type="match status" value="1"/>
</dbReference>
<dbReference type="Gene3D" id="3.40.1030.10">
    <property type="entry name" value="Nucleoside phosphorylase/phosphoribosyltransferase catalytic domain"/>
    <property type="match status" value="1"/>
</dbReference>
<dbReference type="Gene3D" id="3.90.1170.30">
    <property type="entry name" value="Pyrimidine nucleoside phosphorylase-like, C-terminal domain"/>
    <property type="match status" value="1"/>
</dbReference>
<dbReference type="HAMAP" id="MF_02132">
    <property type="entry name" value="AMP_phosphorylase"/>
    <property type="match status" value="1"/>
</dbReference>
<dbReference type="InterPro" id="IPR017713">
    <property type="entry name" value="AMP_phosphorylase"/>
</dbReference>
<dbReference type="InterPro" id="IPR009010">
    <property type="entry name" value="Asp_de-COase-like_dom_sf"/>
</dbReference>
<dbReference type="InterPro" id="IPR000312">
    <property type="entry name" value="Glycosyl_Trfase_fam3"/>
</dbReference>
<dbReference type="InterPro" id="IPR017459">
    <property type="entry name" value="Glycosyl_Trfase_fam3_N_dom"/>
</dbReference>
<dbReference type="InterPro" id="IPR036320">
    <property type="entry name" value="Glycosyl_Trfase_fam3_N_dom_sf"/>
</dbReference>
<dbReference type="InterPro" id="IPR035902">
    <property type="entry name" value="Nuc_phospho_transferase"/>
</dbReference>
<dbReference type="InterPro" id="IPR036566">
    <property type="entry name" value="PYNP-like_C_sf"/>
</dbReference>
<dbReference type="InterPro" id="IPR013102">
    <property type="entry name" value="PYNP_C"/>
</dbReference>
<dbReference type="InterPro" id="IPR017872">
    <property type="entry name" value="Pyrmidine_PPase_CS"/>
</dbReference>
<dbReference type="InterPro" id="IPR013466">
    <property type="entry name" value="Thymidine/AMP_Pase"/>
</dbReference>
<dbReference type="InterPro" id="IPR000053">
    <property type="entry name" value="Thymidine/pyrmidine_PPase"/>
</dbReference>
<dbReference type="NCBIfam" id="TIGR03327">
    <property type="entry name" value="AMP_phos"/>
    <property type="match status" value="1"/>
</dbReference>
<dbReference type="NCBIfam" id="TIGR02645">
    <property type="entry name" value="ARCH_P_rylase"/>
    <property type="match status" value="1"/>
</dbReference>
<dbReference type="NCBIfam" id="NF003338">
    <property type="entry name" value="PRK04350.1"/>
    <property type="match status" value="1"/>
</dbReference>
<dbReference type="PANTHER" id="PTHR10515">
    <property type="entry name" value="THYMIDINE PHOSPHORYLASE"/>
    <property type="match status" value="1"/>
</dbReference>
<dbReference type="PANTHER" id="PTHR10515:SF0">
    <property type="entry name" value="THYMIDINE PHOSPHORYLASE"/>
    <property type="match status" value="1"/>
</dbReference>
<dbReference type="Pfam" id="PF02885">
    <property type="entry name" value="Glycos_trans_3N"/>
    <property type="match status" value="1"/>
</dbReference>
<dbReference type="Pfam" id="PF00591">
    <property type="entry name" value="Glycos_transf_3"/>
    <property type="match status" value="1"/>
</dbReference>
<dbReference type="Pfam" id="PF07831">
    <property type="entry name" value="PYNP_C"/>
    <property type="match status" value="1"/>
</dbReference>
<dbReference type="PIRSF" id="PIRSF000478">
    <property type="entry name" value="TP_PyNP"/>
    <property type="match status" value="1"/>
</dbReference>
<dbReference type="SMART" id="SM00941">
    <property type="entry name" value="PYNP_C"/>
    <property type="match status" value="1"/>
</dbReference>
<dbReference type="SUPFAM" id="SSF50692">
    <property type="entry name" value="ADC-like"/>
    <property type="match status" value="1"/>
</dbReference>
<dbReference type="SUPFAM" id="SSF52418">
    <property type="entry name" value="Nucleoside phosphorylase/phosphoribosyltransferase catalytic domain"/>
    <property type="match status" value="1"/>
</dbReference>
<dbReference type="SUPFAM" id="SSF47648">
    <property type="entry name" value="Nucleoside phosphorylase/phosphoribosyltransferase N-terminal domain"/>
    <property type="match status" value="1"/>
</dbReference>
<dbReference type="SUPFAM" id="SSF54680">
    <property type="entry name" value="Pyrimidine nucleoside phosphorylase C-terminal domain"/>
    <property type="match status" value="1"/>
</dbReference>
<dbReference type="PROSITE" id="PS00647">
    <property type="entry name" value="THYMID_PHOSPHORYLASE"/>
    <property type="match status" value="1"/>
</dbReference>
<comment type="function">
    <text evidence="1">Catalyzes the conversion of AMP and phosphate to adenine and ribose 1,5-bisphosphate (R15P). Exhibits phosphorylase activity toward CMP and UMP in addition to AMP. Functions in an archaeal AMP degradation pathway, together with R15P isomerase and RubisCO.</text>
</comment>
<comment type="catalytic activity">
    <reaction evidence="1">
        <text>AMP + phosphate = alpha-D-ribose 1,5-bisphosphate + adenine</text>
        <dbReference type="Rhea" id="RHEA:36975"/>
        <dbReference type="ChEBI" id="CHEBI:16708"/>
        <dbReference type="ChEBI" id="CHEBI:43474"/>
        <dbReference type="ChEBI" id="CHEBI:68688"/>
        <dbReference type="ChEBI" id="CHEBI:456215"/>
        <dbReference type="EC" id="2.4.2.57"/>
    </reaction>
</comment>
<comment type="catalytic activity">
    <reaction evidence="1">
        <text>CMP + phosphate = cytosine + alpha-D-ribose 1,5-bisphosphate</text>
        <dbReference type="Rhea" id="RHEA:36987"/>
        <dbReference type="ChEBI" id="CHEBI:16040"/>
        <dbReference type="ChEBI" id="CHEBI:43474"/>
        <dbReference type="ChEBI" id="CHEBI:60377"/>
        <dbReference type="ChEBI" id="CHEBI:68688"/>
        <dbReference type="EC" id="2.4.2.57"/>
    </reaction>
</comment>
<comment type="catalytic activity">
    <reaction evidence="1">
        <text>UMP + phosphate = alpha-D-ribose 1,5-bisphosphate + uracil</text>
        <dbReference type="Rhea" id="RHEA:36991"/>
        <dbReference type="ChEBI" id="CHEBI:17568"/>
        <dbReference type="ChEBI" id="CHEBI:43474"/>
        <dbReference type="ChEBI" id="CHEBI:57865"/>
        <dbReference type="ChEBI" id="CHEBI:68688"/>
        <dbReference type="EC" id="2.4.2.57"/>
    </reaction>
</comment>
<comment type="similarity">
    <text evidence="1">Belongs to the thymidine/pyrimidine-nucleoside phosphorylase family. Type 2 subfamily.</text>
</comment>
<organism>
    <name type="scientific">Archaeoglobus fulgidus (strain ATCC 49558 / DSM 4304 / JCM 9628 / NBRC 100126 / VC-16)</name>
    <dbReference type="NCBI Taxonomy" id="224325"/>
    <lineage>
        <taxon>Archaea</taxon>
        <taxon>Methanobacteriati</taxon>
        <taxon>Methanobacteriota</taxon>
        <taxon>Archaeoglobi</taxon>
        <taxon>Archaeoglobales</taxon>
        <taxon>Archaeoglobaceae</taxon>
        <taxon>Archaeoglobus</taxon>
    </lineage>
</organism>
<name>AMPP1_ARCFU</name>
<gene>
    <name type="ordered locus">AF_1341</name>
</gene>
<sequence length="504" mass="54098">MIFKAVRVPFKSGRFAVILNEEDASELGVREGDRVRVRYGKAGVVATVQITREIVEKGFVGLTDLASMELGISDGAEVDVFPSPKPKSVELIKKKTRGEKLSQDEIRRIVEDITNNALSEVELTAFVISSMLRGMDFDEIEWLTRSMIETGERIEFDRGTVVDKHSIGGVPGNKISLLIVPTVAAAGLLIPKTASRAITSASGTADTMEVLANVNLSVDEIKEITERVGGVIAWGGATNIAPADDKIIRVEHPLSIDPRPQLLASVMAKKGSVGAKHVVIDIPVGEGAKIEKVEVGRSLANDFIELGRRLGLNVMAAITYGGQPVGRAIGPALEAREALKTMEDRRGPSSLVEKSLGIAGILFEMTGIATNGYQHARKIFESGKTLEKFREIVAAQGGDESVKAEDVAVGDKTYTLTSQVEGAVVSVNNKSIVKIARTAGAPKDKGAGVYVHKKRGEVVKVGDPLLTIYAEKEWKLDNAIEVANTERPIVVSGMVLEVYGRRGV</sequence>
<feature type="chain" id="PRO_0000059085" description="AMP phosphorylase 1">
    <location>
        <begin position="1"/>
        <end position="504"/>
    </location>
</feature>
<feature type="active site" description="Proton donor" evidence="1">
    <location>
        <position position="257"/>
    </location>
</feature>
<feature type="binding site" evidence="1">
    <location>
        <position position="169"/>
    </location>
    <ligand>
        <name>AMP</name>
        <dbReference type="ChEBI" id="CHEBI:456215"/>
    </ligand>
</feature>
<feature type="binding site" evidence="1">
    <location>
        <begin position="195"/>
        <end position="200"/>
    </location>
    <ligand>
        <name>AMP</name>
        <dbReference type="ChEBI" id="CHEBI:456215"/>
    </ligand>
</feature>
<feature type="binding site" evidence="1">
    <location>
        <position position="204"/>
    </location>
    <ligand>
        <name>AMP</name>
        <dbReference type="ChEBI" id="CHEBI:456215"/>
    </ligand>
</feature>
<feature type="binding site" evidence="1">
    <location>
        <position position="265"/>
    </location>
    <ligand>
        <name>AMP</name>
        <dbReference type="ChEBI" id="CHEBI:456215"/>
    </ligand>
</feature>
<feature type="binding site" evidence="1">
    <location>
        <position position="289"/>
    </location>
    <ligand>
        <name>AMP</name>
        <dbReference type="ChEBI" id="CHEBI:456215"/>
    </ligand>
</feature>
<protein>
    <recommendedName>
        <fullName evidence="1">AMP phosphorylase 1</fullName>
        <shortName evidence="1">AMPpase 1</shortName>
        <ecNumber evidence="1">2.4.2.57</ecNumber>
    </recommendedName>
    <alternativeName>
        <fullName evidence="1">Nucleoside monophosphate phosphorylase 1</fullName>
        <shortName evidence="1">NMP phosphorylase 1</shortName>
    </alternativeName>
</protein>
<evidence type="ECO:0000255" key="1">
    <source>
        <dbReference type="HAMAP-Rule" id="MF_02132"/>
    </source>
</evidence>
<accession>O28928</accession>
<proteinExistence type="inferred from homology"/>